<organism>
    <name type="scientific">Coxiella burnetii (strain CbuK_Q154)</name>
    <name type="common">Coxiella burnetii (strain Q154)</name>
    <dbReference type="NCBI Taxonomy" id="434924"/>
    <lineage>
        <taxon>Bacteria</taxon>
        <taxon>Pseudomonadati</taxon>
        <taxon>Pseudomonadota</taxon>
        <taxon>Gammaproteobacteria</taxon>
        <taxon>Legionellales</taxon>
        <taxon>Coxiellaceae</taxon>
        <taxon>Coxiella</taxon>
    </lineage>
</organism>
<sequence length="524" mass="58728">MLKDIHQHRILILDFGSQYAQLIARRVREIGVYCELMPCDIDEETIRDFNPHGIILSGGPETVTLSHTLRAPAFIFEIGCPVLGICYGMQTMAYQLGGKVNRTAKAEFGHAQLRVLNPAFLFDGIEDQVSPQGEPLLDVWMSHGDIVSELPPGFEATACTDNSPLAAMADFKRRFFGLQFHPEVTHTPQGHRILAHFVIHICQCIPNWTTKHIIEDSIRDIQEKVGKEQVIVGLSGGVDSAVTATLVRKAIGDQLVCVLVDTGLLRLNEVDEVLNVFQKHLGAKVICVDAKDRFMKALKGISDPEEKRKIAGEQFIRVFEEQAKKLNVKWLGQGTIYPDVIESAKTKTGKGHIIKTHHNVGGLPLNMELKLIEPLRELFKDEVRKLGLELGLPADLIYRHPFPGPGLAIRILGEVNAEYINILKQADAIFIEELKKSDYYHQVSQAFAVFMPLKSVGVKGDARHYGYIIALRAVKTVDFMTAQWADLPHEFLSKVSHRIVNEIKEVSRVVYDMTNKPPATIEWE</sequence>
<proteinExistence type="inferred from homology"/>
<dbReference type="EC" id="6.3.5.2" evidence="1"/>
<dbReference type="EMBL" id="CP001020">
    <property type="protein sequence ID" value="ACJ20393.1"/>
    <property type="molecule type" value="Genomic_DNA"/>
</dbReference>
<dbReference type="RefSeq" id="WP_005770971.1">
    <property type="nucleotide sequence ID" value="NC_011528.1"/>
</dbReference>
<dbReference type="SMR" id="B6J7Z4"/>
<dbReference type="KEGG" id="cbc:CbuK_1205"/>
<dbReference type="HOGENOM" id="CLU_014340_0_5_6"/>
<dbReference type="UniPathway" id="UPA00189">
    <property type="reaction ID" value="UER00296"/>
</dbReference>
<dbReference type="GO" id="GO:0005829">
    <property type="term" value="C:cytosol"/>
    <property type="evidence" value="ECO:0007669"/>
    <property type="project" value="TreeGrafter"/>
</dbReference>
<dbReference type="GO" id="GO:0005524">
    <property type="term" value="F:ATP binding"/>
    <property type="evidence" value="ECO:0007669"/>
    <property type="project" value="UniProtKB-UniRule"/>
</dbReference>
<dbReference type="GO" id="GO:0003921">
    <property type="term" value="F:GMP synthase activity"/>
    <property type="evidence" value="ECO:0007669"/>
    <property type="project" value="InterPro"/>
</dbReference>
<dbReference type="CDD" id="cd01742">
    <property type="entry name" value="GATase1_GMP_Synthase"/>
    <property type="match status" value="1"/>
</dbReference>
<dbReference type="CDD" id="cd01997">
    <property type="entry name" value="GMP_synthase_C"/>
    <property type="match status" value="1"/>
</dbReference>
<dbReference type="FunFam" id="3.30.300.10:FF:000002">
    <property type="entry name" value="GMP synthase [glutamine-hydrolyzing]"/>
    <property type="match status" value="1"/>
</dbReference>
<dbReference type="FunFam" id="3.40.50.620:FF:000001">
    <property type="entry name" value="GMP synthase [glutamine-hydrolyzing]"/>
    <property type="match status" value="1"/>
</dbReference>
<dbReference type="FunFam" id="3.40.50.880:FF:000001">
    <property type="entry name" value="GMP synthase [glutamine-hydrolyzing]"/>
    <property type="match status" value="1"/>
</dbReference>
<dbReference type="Gene3D" id="3.30.300.10">
    <property type="match status" value="1"/>
</dbReference>
<dbReference type="Gene3D" id="3.40.50.880">
    <property type="match status" value="1"/>
</dbReference>
<dbReference type="Gene3D" id="3.40.50.620">
    <property type="entry name" value="HUPs"/>
    <property type="match status" value="1"/>
</dbReference>
<dbReference type="HAMAP" id="MF_00344">
    <property type="entry name" value="GMP_synthase"/>
    <property type="match status" value="1"/>
</dbReference>
<dbReference type="InterPro" id="IPR029062">
    <property type="entry name" value="Class_I_gatase-like"/>
</dbReference>
<dbReference type="InterPro" id="IPR017926">
    <property type="entry name" value="GATASE"/>
</dbReference>
<dbReference type="InterPro" id="IPR001674">
    <property type="entry name" value="GMP_synth_C"/>
</dbReference>
<dbReference type="InterPro" id="IPR004739">
    <property type="entry name" value="GMP_synth_GATase"/>
</dbReference>
<dbReference type="InterPro" id="IPR022955">
    <property type="entry name" value="GMP_synthase"/>
</dbReference>
<dbReference type="InterPro" id="IPR025777">
    <property type="entry name" value="GMPS_ATP_PPase_dom"/>
</dbReference>
<dbReference type="InterPro" id="IPR022310">
    <property type="entry name" value="NAD/GMP_synthase"/>
</dbReference>
<dbReference type="InterPro" id="IPR014729">
    <property type="entry name" value="Rossmann-like_a/b/a_fold"/>
</dbReference>
<dbReference type="NCBIfam" id="TIGR00884">
    <property type="entry name" value="guaA_Cterm"/>
    <property type="match status" value="1"/>
</dbReference>
<dbReference type="NCBIfam" id="TIGR00888">
    <property type="entry name" value="guaA_Nterm"/>
    <property type="match status" value="1"/>
</dbReference>
<dbReference type="NCBIfam" id="NF000848">
    <property type="entry name" value="PRK00074.1"/>
    <property type="match status" value="1"/>
</dbReference>
<dbReference type="PANTHER" id="PTHR11922:SF2">
    <property type="entry name" value="GMP SYNTHASE [GLUTAMINE-HYDROLYZING]"/>
    <property type="match status" value="1"/>
</dbReference>
<dbReference type="PANTHER" id="PTHR11922">
    <property type="entry name" value="GMP SYNTHASE-RELATED"/>
    <property type="match status" value="1"/>
</dbReference>
<dbReference type="Pfam" id="PF00117">
    <property type="entry name" value="GATase"/>
    <property type="match status" value="1"/>
</dbReference>
<dbReference type="Pfam" id="PF00958">
    <property type="entry name" value="GMP_synt_C"/>
    <property type="match status" value="1"/>
</dbReference>
<dbReference type="Pfam" id="PF02540">
    <property type="entry name" value="NAD_synthase"/>
    <property type="match status" value="1"/>
</dbReference>
<dbReference type="PRINTS" id="PR00097">
    <property type="entry name" value="ANTSNTHASEII"/>
</dbReference>
<dbReference type="PRINTS" id="PR00099">
    <property type="entry name" value="CPSGATASE"/>
</dbReference>
<dbReference type="PRINTS" id="PR00096">
    <property type="entry name" value="GATASE"/>
</dbReference>
<dbReference type="SUPFAM" id="SSF52402">
    <property type="entry name" value="Adenine nucleotide alpha hydrolases-like"/>
    <property type="match status" value="1"/>
</dbReference>
<dbReference type="SUPFAM" id="SSF52317">
    <property type="entry name" value="Class I glutamine amidotransferase-like"/>
    <property type="match status" value="1"/>
</dbReference>
<dbReference type="SUPFAM" id="SSF54810">
    <property type="entry name" value="GMP synthetase C-terminal dimerisation domain"/>
    <property type="match status" value="1"/>
</dbReference>
<dbReference type="PROSITE" id="PS51273">
    <property type="entry name" value="GATASE_TYPE_1"/>
    <property type="match status" value="1"/>
</dbReference>
<dbReference type="PROSITE" id="PS51553">
    <property type="entry name" value="GMPS_ATP_PPASE"/>
    <property type="match status" value="1"/>
</dbReference>
<gene>
    <name evidence="1" type="primary">guaA</name>
    <name type="ordered locus">CbuK_1205</name>
</gene>
<accession>B6J7Z4</accession>
<name>GUAA_COXB1</name>
<protein>
    <recommendedName>
        <fullName evidence="1">GMP synthase [glutamine-hydrolyzing]</fullName>
        <ecNumber evidence="1">6.3.5.2</ecNumber>
    </recommendedName>
    <alternativeName>
        <fullName evidence="1">GMP synthetase</fullName>
    </alternativeName>
    <alternativeName>
        <fullName evidence="1">Glutamine amidotransferase</fullName>
    </alternativeName>
</protein>
<feature type="chain" id="PRO_1000120266" description="GMP synthase [glutamine-hydrolyzing]">
    <location>
        <begin position="1"/>
        <end position="524"/>
    </location>
</feature>
<feature type="domain" description="Glutamine amidotransferase type-1" evidence="1">
    <location>
        <begin position="9"/>
        <end position="207"/>
    </location>
</feature>
<feature type="domain" description="GMPS ATP-PPase" evidence="1">
    <location>
        <begin position="208"/>
        <end position="399"/>
    </location>
</feature>
<feature type="active site" description="Nucleophile" evidence="1">
    <location>
        <position position="86"/>
    </location>
</feature>
<feature type="active site" evidence="1">
    <location>
        <position position="181"/>
    </location>
</feature>
<feature type="active site" evidence="1">
    <location>
        <position position="183"/>
    </location>
</feature>
<feature type="binding site" evidence="1">
    <location>
        <begin position="235"/>
        <end position="241"/>
    </location>
    <ligand>
        <name>ATP</name>
        <dbReference type="ChEBI" id="CHEBI:30616"/>
    </ligand>
</feature>
<comment type="function">
    <text evidence="1">Catalyzes the synthesis of GMP from XMP.</text>
</comment>
<comment type="catalytic activity">
    <reaction evidence="1">
        <text>XMP + L-glutamine + ATP + H2O = GMP + L-glutamate + AMP + diphosphate + 2 H(+)</text>
        <dbReference type="Rhea" id="RHEA:11680"/>
        <dbReference type="ChEBI" id="CHEBI:15377"/>
        <dbReference type="ChEBI" id="CHEBI:15378"/>
        <dbReference type="ChEBI" id="CHEBI:29985"/>
        <dbReference type="ChEBI" id="CHEBI:30616"/>
        <dbReference type="ChEBI" id="CHEBI:33019"/>
        <dbReference type="ChEBI" id="CHEBI:57464"/>
        <dbReference type="ChEBI" id="CHEBI:58115"/>
        <dbReference type="ChEBI" id="CHEBI:58359"/>
        <dbReference type="ChEBI" id="CHEBI:456215"/>
        <dbReference type="EC" id="6.3.5.2"/>
    </reaction>
</comment>
<comment type="pathway">
    <text evidence="1">Purine metabolism; GMP biosynthesis; GMP from XMP (L-Gln route): step 1/1.</text>
</comment>
<comment type="subunit">
    <text evidence="1">Homodimer.</text>
</comment>
<evidence type="ECO:0000255" key="1">
    <source>
        <dbReference type="HAMAP-Rule" id="MF_00344"/>
    </source>
</evidence>
<keyword id="KW-0067">ATP-binding</keyword>
<keyword id="KW-0315">Glutamine amidotransferase</keyword>
<keyword id="KW-0332">GMP biosynthesis</keyword>
<keyword id="KW-0436">Ligase</keyword>
<keyword id="KW-0547">Nucleotide-binding</keyword>
<keyword id="KW-0658">Purine biosynthesis</keyword>
<reference key="1">
    <citation type="journal article" date="2009" name="Infect. Immun.">
        <title>Comparative genomics reveal extensive transposon-mediated genomic plasticity and diversity among potential effector proteins within the genus Coxiella.</title>
        <authorList>
            <person name="Beare P.A."/>
            <person name="Unsworth N."/>
            <person name="Andoh M."/>
            <person name="Voth D.E."/>
            <person name="Omsland A."/>
            <person name="Gilk S.D."/>
            <person name="Williams K.P."/>
            <person name="Sobral B.W."/>
            <person name="Kupko J.J. III"/>
            <person name="Porcella S.F."/>
            <person name="Samuel J.E."/>
            <person name="Heinzen R.A."/>
        </authorList>
    </citation>
    <scope>NUCLEOTIDE SEQUENCE [LARGE SCALE GENOMIC DNA]</scope>
    <source>
        <strain>CbuK_Q154</strain>
    </source>
</reference>